<comment type="function">
    <text evidence="1">Assembles around the rod to form the L-ring and probably protects the motor/basal body from shearing forces during rotation.</text>
</comment>
<comment type="subunit">
    <text evidence="1">The basal body constitutes a major portion of the flagellar organelle and consists of four rings (L,P,S, and M) mounted on a central rod.</text>
</comment>
<comment type="subcellular location">
    <subcellularLocation>
        <location evidence="1">Periplasm</location>
    </subcellularLocation>
    <subcellularLocation>
        <location evidence="1">Bacterial flagellum basal body</location>
    </subcellularLocation>
</comment>
<comment type="similarity">
    <text evidence="3">Belongs to the FlgI family.</text>
</comment>
<keyword id="KW-0975">Bacterial flagellum</keyword>
<keyword id="KW-0574">Periplasm</keyword>
<keyword id="KW-1185">Reference proteome</keyword>
<keyword id="KW-0732">Signal</keyword>
<protein>
    <recommendedName>
        <fullName>Flagellar P-ring protein</fullName>
    </recommendedName>
    <alternativeName>
        <fullName>Basal body P-ring protein</fullName>
    </alternativeName>
</protein>
<name>FLGI_CAMJE</name>
<reference key="1">
    <citation type="journal article" date="2000" name="Nature">
        <title>The genome sequence of the food-borne pathogen Campylobacter jejuni reveals hypervariable sequences.</title>
        <authorList>
            <person name="Parkhill J."/>
            <person name="Wren B.W."/>
            <person name="Mungall K.L."/>
            <person name="Ketley J.M."/>
            <person name="Churcher C.M."/>
            <person name="Basham D."/>
            <person name="Chillingworth T."/>
            <person name="Davies R.M."/>
            <person name="Feltwell T."/>
            <person name="Holroyd S."/>
            <person name="Jagels K."/>
            <person name="Karlyshev A.V."/>
            <person name="Moule S."/>
            <person name="Pallen M.J."/>
            <person name="Penn C.W."/>
            <person name="Quail M.A."/>
            <person name="Rajandream M.A."/>
            <person name="Rutherford K.M."/>
            <person name="van Vliet A.H.M."/>
            <person name="Whitehead S."/>
            <person name="Barrell B.G."/>
        </authorList>
    </citation>
    <scope>NUCLEOTIDE SEQUENCE [LARGE SCALE GENOMIC DNA]</scope>
    <source>
        <strain>ATCC 700819 / NCTC 11168</strain>
    </source>
</reference>
<proteinExistence type="inferred from homology"/>
<organism>
    <name type="scientific">Campylobacter jejuni subsp. jejuni serotype O:2 (strain ATCC 700819 / NCTC 11168)</name>
    <dbReference type="NCBI Taxonomy" id="192222"/>
    <lineage>
        <taxon>Bacteria</taxon>
        <taxon>Pseudomonadati</taxon>
        <taxon>Campylobacterota</taxon>
        <taxon>Epsilonproteobacteria</taxon>
        <taxon>Campylobacterales</taxon>
        <taxon>Campylobacteraceae</taxon>
        <taxon>Campylobacter</taxon>
    </lineage>
</organism>
<evidence type="ECO:0000250" key="1"/>
<evidence type="ECO:0000255" key="2"/>
<evidence type="ECO:0000305" key="3"/>
<accession>Q9PMJ8</accession>
<accession>Q0P8F3</accession>
<sequence>MRVLTIFLLFMTSIFAVQIKDVANTVGVRDNQLIGYGLVVGLNGSGDGTSSKFTLQSISNLLQGMNIKVDPNDIKSKNTAAVMVTAKLPAFAKSGDKLDITVSSMGDAKSLQGGTLLLTALRGIDGEIYAIAQGSISTGGLTPRPGGTGSHSTAATVMGGANVEREIPQNFSQNNDLTLSLKVADFKTANNIERVLNTVFGEEVAKAIDSRTVKLKKPEDLSNVDFMARVLEQDIAYKPQSKVIIDERTGTVIAGVDVEVEPVLITHKDITIKIDPNNNTVANQNEIDMKDGGFVDPSSNTLRINNAKSTVANIARMLNKLGATPNDIIAIMENLKRAGAINADLEII</sequence>
<feature type="signal peptide" evidence="2">
    <location>
        <begin position="1"/>
        <end position="16"/>
    </location>
</feature>
<feature type="chain" id="PRO_0000009498" description="Flagellar P-ring protein">
    <location>
        <begin position="17"/>
        <end position="348"/>
    </location>
</feature>
<gene>
    <name type="primary">flgI</name>
    <name type="ordered locus">Cj1462</name>
</gene>
<dbReference type="EMBL" id="AL111168">
    <property type="protein sequence ID" value="CAL35570.1"/>
    <property type="molecule type" value="Genomic_DNA"/>
</dbReference>
<dbReference type="PIR" id="E81292">
    <property type="entry name" value="E81292"/>
</dbReference>
<dbReference type="RefSeq" id="WP_002858049.1">
    <property type="nucleotide sequence ID" value="NZ_SZUC01000003.1"/>
</dbReference>
<dbReference type="RefSeq" id="YP_002344844.1">
    <property type="nucleotide sequence ID" value="NC_002163.1"/>
</dbReference>
<dbReference type="SMR" id="Q9PMJ8"/>
<dbReference type="IntAct" id="Q9PMJ8">
    <property type="interactions" value="7"/>
</dbReference>
<dbReference type="STRING" id="192222.Cj1462"/>
<dbReference type="PaxDb" id="192222-Cj1462"/>
<dbReference type="EnsemblBacteria" id="CAL35570">
    <property type="protein sequence ID" value="CAL35570"/>
    <property type="gene ID" value="Cj1462"/>
</dbReference>
<dbReference type="GeneID" id="905750"/>
<dbReference type="KEGG" id="cje:Cj1462"/>
<dbReference type="PATRIC" id="fig|192222.6.peg.1442"/>
<dbReference type="eggNOG" id="COG1706">
    <property type="taxonomic scope" value="Bacteria"/>
</dbReference>
<dbReference type="HOGENOM" id="CLU_045235_1_0_7"/>
<dbReference type="OrthoDB" id="9786431at2"/>
<dbReference type="Proteomes" id="UP000000799">
    <property type="component" value="Chromosome"/>
</dbReference>
<dbReference type="GO" id="GO:0009428">
    <property type="term" value="C:bacterial-type flagellum basal body, distal rod, P ring"/>
    <property type="evidence" value="ECO:0007669"/>
    <property type="project" value="InterPro"/>
</dbReference>
<dbReference type="GO" id="GO:0030288">
    <property type="term" value="C:outer membrane-bounded periplasmic space"/>
    <property type="evidence" value="ECO:0007669"/>
    <property type="project" value="InterPro"/>
</dbReference>
<dbReference type="GO" id="GO:0005198">
    <property type="term" value="F:structural molecule activity"/>
    <property type="evidence" value="ECO:0007669"/>
    <property type="project" value="InterPro"/>
</dbReference>
<dbReference type="GO" id="GO:0071973">
    <property type="term" value="P:bacterial-type flagellum-dependent cell motility"/>
    <property type="evidence" value="ECO:0007669"/>
    <property type="project" value="InterPro"/>
</dbReference>
<dbReference type="HAMAP" id="MF_00416">
    <property type="entry name" value="FlgI"/>
    <property type="match status" value="1"/>
</dbReference>
<dbReference type="InterPro" id="IPR001782">
    <property type="entry name" value="Flag_FlgI"/>
</dbReference>
<dbReference type="NCBIfam" id="NF003676">
    <property type="entry name" value="PRK05303.1"/>
    <property type="match status" value="1"/>
</dbReference>
<dbReference type="PANTHER" id="PTHR30381">
    <property type="entry name" value="FLAGELLAR P-RING PERIPLASMIC PROTEIN FLGI"/>
    <property type="match status" value="1"/>
</dbReference>
<dbReference type="PANTHER" id="PTHR30381:SF0">
    <property type="entry name" value="FLAGELLAR P-RING PROTEIN"/>
    <property type="match status" value="1"/>
</dbReference>
<dbReference type="Pfam" id="PF02119">
    <property type="entry name" value="FlgI"/>
    <property type="match status" value="1"/>
</dbReference>
<dbReference type="PRINTS" id="PR01010">
    <property type="entry name" value="FLGPRINGFLGI"/>
</dbReference>